<accession>Q8DK29</accession>
<dbReference type="EC" id="1.17.7.4" evidence="1"/>
<dbReference type="EMBL" id="BA000039">
    <property type="protein sequence ID" value="BAC08594.1"/>
    <property type="molecule type" value="Genomic_DNA"/>
</dbReference>
<dbReference type="RefSeq" id="NP_681832.1">
    <property type="nucleotide sequence ID" value="NC_004113.1"/>
</dbReference>
<dbReference type="RefSeq" id="WP_011056884.1">
    <property type="nucleotide sequence ID" value="NC_004113.1"/>
</dbReference>
<dbReference type="SMR" id="Q8DK29"/>
<dbReference type="STRING" id="197221.gene:10747634"/>
<dbReference type="EnsemblBacteria" id="BAC08594">
    <property type="protein sequence ID" value="BAC08594"/>
    <property type="gene ID" value="BAC08594"/>
</dbReference>
<dbReference type="KEGG" id="tel:tlr1041"/>
<dbReference type="PATRIC" id="fig|197221.4.peg.1093"/>
<dbReference type="eggNOG" id="COG0761">
    <property type="taxonomic scope" value="Bacteria"/>
</dbReference>
<dbReference type="UniPathway" id="UPA00056">
    <property type="reaction ID" value="UER00097"/>
</dbReference>
<dbReference type="UniPathway" id="UPA00059">
    <property type="reaction ID" value="UER00105"/>
</dbReference>
<dbReference type="Proteomes" id="UP000000440">
    <property type="component" value="Chromosome"/>
</dbReference>
<dbReference type="GO" id="GO:0051539">
    <property type="term" value="F:4 iron, 4 sulfur cluster binding"/>
    <property type="evidence" value="ECO:0007669"/>
    <property type="project" value="UniProtKB-UniRule"/>
</dbReference>
<dbReference type="GO" id="GO:0051745">
    <property type="term" value="F:4-hydroxy-3-methylbut-2-enyl diphosphate reductase activity"/>
    <property type="evidence" value="ECO:0007669"/>
    <property type="project" value="UniProtKB-UniRule"/>
</dbReference>
<dbReference type="GO" id="GO:0046872">
    <property type="term" value="F:metal ion binding"/>
    <property type="evidence" value="ECO:0007669"/>
    <property type="project" value="UniProtKB-KW"/>
</dbReference>
<dbReference type="GO" id="GO:0050992">
    <property type="term" value="P:dimethylallyl diphosphate biosynthetic process"/>
    <property type="evidence" value="ECO:0007669"/>
    <property type="project" value="UniProtKB-UniRule"/>
</dbReference>
<dbReference type="GO" id="GO:0019288">
    <property type="term" value="P:isopentenyl diphosphate biosynthetic process, methylerythritol 4-phosphate pathway"/>
    <property type="evidence" value="ECO:0007669"/>
    <property type="project" value="UniProtKB-UniRule"/>
</dbReference>
<dbReference type="GO" id="GO:0016114">
    <property type="term" value="P:terpenoid biosynthetic process"/>
    <property type="evidence" value="ECO:0007669"/>
    <property type="project" value="UniProtKB-UniRule"/>
</dbReference>
<dbReference type="CDD" id="cd13944">
    <property type="entry name" value="lytB_ispH"/>
    <property type="match status" value="1"/>
</dbReference>
<dbReference type="Gene3D" id="3.40.50.11270">
    <property type="match status" value="1"/>
</dbReference>
<dbReference type="Gene3D" id="3.40.1010.20">
    <property type="entry name" value="4-hydroxy-3-methylbut-2-enyl diphosphate reductase, catalytic domain"/>
    <property type="match status" value="2"/>
</dbReference>
<dbReference type="HAMAP" id="MF_00191">
    <property type="entry name" value="IspH"/>
    <property type="match status" value="1"/>
</dbReference>
<dbReference type="InterPro" id="IPR003451">
    <property type="entry name" value="LytB/IspH"/>
</dbReference>
<dbReference type="NCBIfam" id="TIGR00216">
    <property type="entry name" value="ispH_lytB"/>
    <property type="match status" value="1"/>
</dbReference>
<dbReference type="NCBIfam" id="NF009911">
    <property type="entry name" value="PRK13371.1"/>
    <property type="match status" value="1"/>
</dbReference>
<dbReference type="PANTHER" id="PTHR31619">
    <property type="entry name" value="4-HYDROXY-3-METHYLBUT-2-ENYL DIPHOSPHATE REDUCTASE, CHLOROPLASTIC"/>
    <property type="match status" value="1"/>
</dbReference>
<dbReference type="PANTHER" id="PTHR31619:SF5">
    <property type="entry name" value="4-HYDROXY-3-METHYLBUT-2-ENYL DIPHOSPHATE REDUCTASE, CHLOROPLASTIC"/>
    <property type="match status" value="1"/>
</dbReference>
<dbReference type="Pfam" id="PF02401">
    <property type="entry name" value="LYTB"/>
    <property type="match status" value="1"/>
</dbReference>
<gene>
    <name evidence="1" type="primary">ispH</name>
    <name type="ordered locus">tlr1041</name>
</gene>
<feature type="chain" id="PRO_0000128877" description="4-hydroxy-3-methylbut-2-enyl diphosphate reductase">
    <location>
        <begin position="1"/>
        <end position="402"/>
    </location>
</feature>
<feature type="active site" description="Proton donor" evidence="1">
    <location>
        <position position="187"/>
    </location>
</feature>
<feature type="binding site" evidence="1">
    <location>
        <position position="66"/>
    </location>
    <ligand>
        <name>[4Fe-4S] cluster</name>
        <dbReference type="ChEBI" id="CHEBI:49883"/>
    </ligand>
</feature>
<feature type="binding site" evidence="1">
    <location>
        <position position="96"/>
    </location>
    <ligand>
        <name>(2E)-4-hydroxy-3-methylbut-2-enyl diphosphate</name>
        <dbReference type="ChEBI" id="CHEBI:128753"/>
    </ligand>
</feature>
<feature type="binding site" evidence="1">
    <location>
        <position position="96"/>
    </location>
    <ligand>
        <name>dimethylallyl diphosphate</name>
        <dbReference type="ChEBI" id="CHEBI:57623"/>
    </ligand>
</feature>
<feature type="binding site" evidence="1">
    <location>
        <position position="96"/>
    </location>
    <ligand>
        <name>isopentenyl diphosphate</name>
        <dbReference type="ChEBI" id="CHEBI:128769"/>
    </ligand>
</feature>
<feature type="binding site" evidence="1">
    <location>
        <position position="157"/>
    </location>
    <ligand>
        <name>[4Fe-4S] cluster</name>
        <dbReference type="ChEBI" id="CHEBI:49883"/>
    </ligand>
</feature>
<feature type="binding site" evidence="1">
    <location>
        <position position="185"/>
    </location>
    <ligand>
        <name>(2E)-4-hydroxy-3-methylbut-2-enyl diphosphate</name>
        <dbReference type="ChEBI" id="CHEBI:128753"/>
    </ligand>
</feature>
<feature type="binding site" evidence="1">
    <location>
        <position position="185"/>
    </location>
    <ligand>
        <name>dimethylallyl diphosphate</name>
        <dbReference type="ChEBI" id="CHEBI:57623"/>
    </ligand>
</feature>
<feature type="binding site" evidence="1">
    <location>
        <position position="185"/>
    </location>
    <ligand>
        <name>isopentenyl diphosphate</name>
        <dbReference type="ChEBI" id="CHEBI:128769"/>
    </ligand>
</feature>
<feature type="binding site" evidence="1">
    <location>
        <position position="250"/>
    </location>
    <ligand>
        <name>(2E)-4-hydroxy-3-methylbut-2-enyl diphosphate</name>
        <dbReference type="ChEBI" id="CHEBI:128753"/>
    </ligand>
</feature>
<feature type="binding site" evidence="1">
    <location>
        <position position="288"/>
    </location>
    <ligand>
        <name>[4Fe-4S] cluster</name>
        <dbReference type="ChEBI" id="CHEBI:49883"/>
    </ligand>
</feature>
<feature type="binding site" evidence="1">
    <location>
        <position position="317"/>
    </location>
    <ligand>
        <name>(2E)-4-hydroxy-3-methylbut-2-enyl diphosphate</name>
        <dbReference type="ChEBI" id="CHEBI:128753"/>
    </ligand>
</feature>
<feature type="binding site" evidence="1">
    <location>
        <position position="317"/>
    </location>
    <ligand>
        <name>dimethylallyl diphosphate</name>
        <dbReference type="ChEBI" id="CHEBI:57623"/>
    </ligand>
</feature>
<feature type="binding site" evidence="1">
    <location>
        <position position="317"/>
    </location>
    <ligand>
        <name>isopentenyl diphosphate</name>
        <dbReference type="ChEBI" id="CHEBI:128769"/>
    </ligand>
</feature>
<feature type="binding site" evidence="1">
    <location>
        <position position="318"/>
    </location>
    <ligand>
        <name>(2E)-4-hydroxy-3-methylbut-2-enyl diphosphate</name>
        <dbReference type="ChEBI" id="CHEBI:128753"/>
    </ligand>
</feature>
<feature type="binding site" evidence="1">
    <location>
        <position position="318"/>
    </location>
    <ligand>
        <name>dimethylallyl diphosphate</name>
        <dbReference type="ChEBI" id="CHEBI:57623"/>
    </ligand>
</feature>
<feature type="binding site" evidence="1">
    <location>
        <position position="318"/>
    </location>
    <ligand>
        <name>isopentenyl diphosphate</name>
        <dbReference type="ChEBI" id="CHEBI:128769"/>
    </ligand>
</feature>
<feature type="binding site" evidence="1">
    <location>
        <position position="319"/>
    </location>
    <ligand>
        <name>(2E)-4-hydroxy-3-methylbut-2-enyl diphosphate</name>
        <dbReference type="ChEBI" id="CHEBI:128753"/>
    </ligand>
</feature>
<feature type="binding site" evidence="1">
    <location>
        <position position="319"/>
    </location>
    <ligand>
        <name>dimethylallyl diphosphate</name>
        <dbReference type="ChEBI" id="CHEBI:57623"/>
    </ligand>
</feature>
<feature type="binding site" evidence="1">
    <location>
        <position position="319"/>
    </location>
    <ligand>
        <name>isopentenyl diphosphate</name>
        <dbReference type="ChEBI" id="CHEBI:128769"/>
    </ligand>
</feature>
<feature type="binding site" evidence="1">
    <location>
        <position position="379"/>
    </location>
    <ligand>
        <name>(2E)-4-hydroxy-3-methylbut-2-enyl diphosphate</name>
        <dbReference type="ChEBI" id="CHEBI:128753"/>
    </ligand>
</feature>
<feature type="binding site" evidence="1">
    <location>
        <position position="379"/>
    </location>
    <ligand>
        <name>dimethylallyl diphosphate</name>
        <dbReference type="ChEBI" id="CHEBI:57623"/>
    </ligand>
</feature>
<feature type="binding site" evidence="1">
    <location>
        <position position="379"/>
    </location>
    <ligand>
        <name>isopentenyl diphosphate</name>
        <dbReference type="ChEBI" id="CHEBI:128769"/>
    </ligand>
</feature>
<comment type="function">
    <text evidence="1">Catalyzes the conversion of 1-hydroxy-2-methyl-2-(E)-butenyl 4-diphosphate (HMBPP) into a mixture of isopentenyl diphosphate (IPP) and dimethylallyl diphosphate (DMAPP). Acts in the terminal step of the DOXP/MEP pathway for isoprenoid precursor biosynthesis.</text>
</comment>
<comment type="catalytic activity">
    <reaction evidence="1">
        <text>isopentenyl diphosphate + 2 oxidized [2Fe-2S]-[ferredoxin] + H2O = (2E)-4-hydroxy-3-methylbut-2-enyl diphosphate + 2 reduced [2Fe-2S]-[ferredoxin] + 2 H(+)</text>
        <dbReference type="Rhea" id="RHEA:24488"/>
        <dbReference type="Rhea" id="RHEA-COMP:10000"/>
        <dbReference type="Rhea" id="RHEA-COMP:10001"/>
        <dbReference type="ChEBI" id="CHEBI:15377"/>
        <dbReference type="ChEBI" id="CHEBI:15378"/>
        <dbReference type="ChEBI" id="CHEBI:33737"/>
        <dbReference type="ChEBI" id="CHEBI:33738"/>
        <dbReference type="ChEBI" id="CHEBI:128753"/>
        <dbReference type="ChEBI" id="CHEBI:128769"/>
        <dbReference type="EC" id="1.17.7.4"/>
    </reaction>
</comment>
<comment type="catalytic activity">
    <reaction evidence="1">
        <text>dimethylallyl diphosphate + 2 oxidized [2Fe-2S]-[ferredoxin] + H2O = (2E)-4-hydroxy-3-methylbut-2-enyl diphosphate + 2 reduced [2Fe-2S]-[ferredoxin] + 2 H(+)</text>
        <dbReference type="Rhea" id="RHEA:24825"/>
        <dbReference type="Rhea" id="RHEA-COMP:10000"/>
        <dbReference type="Rhea" id="RHEA-COMP:10001"/>
        <dbReference type="ChEBI" id="CHEBI:15377"/>
        <dbReference type="ChEBI" id="CHEBI:15378"/>
        <dbReference type="ChEBI" id="CHEBI:33737"/>
        <dbReference type="ChEBI" id="CHEBI:33738"/>
        <dbReference type="ChEBI" id="CHEBI:57623"/>
        <dbReference type="ChEBI" id="CHEBI:128753"/>
        <dbReference type="EC" id="1.17.7.4"/>
    </reaction>
</comment>
<comment type="cofactor">
    <cofactor evidence="1">
        <name>[4Fe-4S] cluster</name>
        <dbReference type="ChEBI" id="CHEBI:49883"/>
    </cofactor>
    <text evidence="1">Binds 1 [4Fe-4S] cluster per subunit.</text>
</comment>
<comment type="pathway">
    <text evidence="1">Isoprenoid biosynthesis; dimethylallyl diphosphate biosynthesis; dimethylallyl diphosphate from (2E)-4-hydroxy-3-methylbutenyl diphosphate: step 1/1.</text>
</comment>
<comment type="pathway">
    <text evidence="1">Isoprenoid biosynthesis; isopentenyl diphosphate biosynthesis via DXP pathway; isopentenyl diphosphate from 1-deoxy-D-xylulose 5-phosphate: step 6/6.</text>
</comment>
<comment type="similarity">
    <text evidence="1">Belongs to the IspH family.</text>
</comment>
<reference key="1">
    <citation type="journal article" date="2002" name="DNA Res.">
        <title>Complete genome structure of the thermophilic cyanobacterium Thermosynechococcus elongatus BP-1.</title>
        <authorList>
            <person name="Nakamura Y."/>
            <person name="Kaneko T."/>
            <person name="Sato S."/>
            <person name="Ikeuchi M."/>
            <person name="Katoh H."/>
            <person name="Sasamoto S."/>
            <person name="Watanabe A."/>
            <person name="Iriguchi M."/>
            <person name="Kawashima K."/>
            <person name="Kimura T."/>
            <person name="Kishida Y."/>
            <person name="Kiyokawa C."/>
            <person name="Kohara M."/>
            <person name="Matsumoto M."/>
            <person name="Matsuno A."/>
            <person name="Nakazaki N."/>
            <person name="Shimpo S."/>
            <person name="Sugimoto M."/>
            <person name="Takeuchi C."/>
            <person name="Yamada M."/>
            <person name="Tabata S."/>
        </authorList>
    </citation>
    <scope>NUCLEOTIDE SEQUENCE [LARGE SCALE GENOMIC DNA]</scope>
    <source>
        <strain>NIES-2133 / IAM M-273 / BP-1</strain>
    </source>
</reference>
<proteinExistence type="inferred from homology"/>
<keyword id="KW-0004">4Fe-4S</keyword>
<keyword id="KW-0408">Iron</keyword>
<keyword id="KW-0411">Iron-sulfur</keyword>
<keyword id="KW-0414">Isoprene biosynthesis</keyword>
<keyword id="KW-0479">Metal-binding</keyword>
<keyword id="KW-0560">Oxidoreductase</keyword>
<keyword id="KW-1185">Reference proteome</keyword>
<name>ISPH_THEVB</name>
<evidence type="ECO:0000255" key="1">
    <source>
        <dbReference type="HAMAP-Rule" id="MF_00191"/>
    </source>
</evidence>
<organism>
    <name type="scientific">Thermosynechococcus vestitus (strain NIES-2133 / IAM M-273 / BP-1)</name>
    <dbReference type="NCBI Taxonomy" id="197221"/>
    <lineage>
        <taxon>Bacteria</taxon>
        <taxon>Bacillati</taxon>
        <taxon>Cyanobacteriota</taxon>
        <taxon>Cyanophyceae</taxon>
        <taxon>Acaryochloridales</taxon>
        <taxon>Thermosynechococcaceae</taxon>
        <taxon>Thermosynechococcus</taxon>
    </lineage>
</organism>
<sequence length="402" mass="45213">MDTRAFKRSLHSSENYHRKGFGHGEEVNQQLQGEYQSSLIQQIRANGYRWQQGDVTIRLAEAFGFCWGVERAVALAYETRTHFPTERIWITNEIIHNPSVNERLRQMAVEFIPVVNGVKDFSGVRPGDVVILPAFGASVQEMQLLNERGCTIVDTTCPWVSKVWHSVEKHKKVSFTSIIHGKYNHEETIATSSFAGTYLIVLNLEEARYVCDYILHGGDRAAFMAKFAKACSPGFDPDRDLVRVGIANQTTMLKGETEQIGKLFERTMIQKYGPDRLNEHFMSFNTICDATQERQDAMLSLVKEPLDLMVVIGGYNSSNTTHLQEIAIEHGIPSYHIDSADRIGPGNRIEHKPLHQNPTVAENWLPDRPITIGITSGASTPDKVVEEVLNKIFALRSVATVS</sequence>
<protein>
    <recommendedName>
        <fullName evidence="1">4-hydroxy-3-methylbut-2-enyl diphosphate reductase</fullName>
        <shortName evidence="1">HMBPP reductase</shortName>
        <ecNumber evidence="1">1.17.7.4</ecNumber>
    </recommendedName>
</protein>